<sequence>MAHKKGTGSTRNGRDSNAQRLGVKRYGGQTVTAGSIIVRQRGTQVHPGNNVGRGKDDTLFALIDGVVKFEHKTRSRRKVSVYPATAE</sequence>
<reference key="1">
    <citation type="journal article" date="1996" name="DNA Res.">
        <title>Sequence analysis of the genome of the unicellular cyanobacterium Synechocystis sp. strain PCC6803. II. Sequence determination of the entire genome and assignment of potential protein-coding regions.</title>
        <authorList>
            <person name="Kaneko T."/>
            <person name="Sato S."/>
            <person name="Kotani H."/>
            <person name="Tanaka A."/>
            <person name="Asamizu E."/>
            <person name="Nakamura Y."/>
            <person name="Miyajima N."/>
            <person name="Hirosawa M."/>
            <person name="Sugiura M."/>
            <person name="Sasamoto S."/>
            <person name="Kimura T."/>
            <person name="Hosouchi T."/>
            <person name="Matsuno A."/>
            <person name="Muraki A."/>
            <person name="Nakazaki N."/>
            <person name="Naruo K."/>
            <person name="Okumura S."/>
            <person name="Shimpo S."/>
            <person name="Takeuchi C."/>
            <person name="Wada T."/>
            <person name="Watanabe A."/>
            <person name="Yamada M."/>
            <person name="Yasuda M."/>
            <person name="Tabata S."/>
        </authorList>
    </citation>
    <scope>NUCLEOTIDE SEQUENCE [LARGE SCALE GENOMIC DNA]</scope>
    <source>
        <strain>ATCC 27184 / PCC 6803 / Kazusa</strain>
    </source>
</reference>
<feature type="chain" id="PRO_0000181191" description="Large ribosomal subunit protein bL27">
    <location>
        <begin position="1"/>
        <end position="87"/>
    </location>
</feature>
<feature type="region of interest" description="Disordered" evidence="1">
    <location>
        <begin position="1"/>
        <end position="23"/>
    </location>
</feature>
<feature type="compositionally biased region" description="Polar residues" evidence="1">
    <location>
        <begin position="7"/>
        <end position="19"/>
    </location>
</feature>
<evidence type="ECO:0000256" key="1">
    <source>
        <dbReference type="SAM" id="MobiDB-lite"/>
    </source>
</evidence>
<evidence type="ECO:0000305" key="2"/>
<protein>
    <recommendedName>
        <fullName evidence="2">Large ribosomal subunit protein bL27</fullName>
    </recommendedName>
    <alternativeName>
        <fullName>50S ribosomal protein L27</fullName>
    </alternativeName>
</protein>
<proteinExistence type="inferred from homology"/>
<comment type="similarity">
    <text evidence="2">Belongs to the bacterial ribosomal protein bL27 family.</text>
</comment>
<organism>
    <name type="scientific">Synechocystis sp. (strain ATCC 27184 / PCC 6803 / Kazusa)</name>
    <dbReference type="NCBI Taxonomy" id="1111708"/>
    <lineage>
        <taxon>Bacteria</taxon>
        <taxon>Bacillati</taxon>
        <taxon>Cyanobacteriota</taxon>
        <taxon>Cyanophyceae</taxon>
        <taxon>Synechococcales</taxon>
        <taxon>Merismopediaceae</taxon>
        <taxon>Synechocystis</taxon>
    </lineage>
</organism>
<gene>
    <name type="primary">rpmA</name>
    <name type="synonym">rpl27</name>
    <name type="ordered locus">ssr2799</name>
</gene>
<dbReference type="EMBL" id="BA000022">
    <property type="protein sequence ID" value="BAA18361.1"/>
    <property type="molecule type" value="Genomic_DNA"/>
</dbReference>
<dbReference type="PIR" id="S75902">
    <property type="entry name" value="S75902"/>
</dbReference>
<dbReference type="SMR" id="P74267"/>
<dbReference type="FunCoup" id="P74267">
    <property type="interactions" value="398"/>
</dbReference>
<dbReference type="STRING" id="1148.gene:10499237"/>
<dbReference type="PaxDb" id="1148-1653447"/>
<dbReference type="EnsemblBacteria" id="BAA18361">
    <property type="protein sequence ID" value="BAA18361"/>
    <property type="gene ID" value="BAA18361"/>
</dbReference>
<dbReference type="KEGG" id="syn:ssr2799"/>
<dbReference type="eggNOG" id="COG0211">
    <property type="taxonomic scope" value="Bacteria"/>
</dbReference>
<dbReference type="InParanoid" id="P74267"/>
<dbReference type="PhylomeDB" id="P74267"/>
<dbReference type="Proteomes" id="UP000001425">
    <property type="component" value="Chromosome"/>
</dbReference>
<dbReference type="GO" id="GO:0022625">
    <property type="term" value="C:cytosolic large ribosomal subunit"/>
    <property type="evidence" value="ECO:0000318"/>
    <property type="project" value="GO_Central"/>
</dbReference>
<dbReference type="GO" id="GO:0003735">
    <property type="term" value="F:structural constituent of ribosome"/>
    <property type="evidence" value="ECO:0000318"/>
    <property type="project" value="GO_Central"/>
</dbReference>
<dbReference type="GO" id="GO:0006412">
    <property type="term" value="P:translation"/>
    <property type="evidence" value="ECO:0007669"/>
    <property type="project" value="UniProtKB-UniRule"/>
</dbReference>
<dbReference type="FunFam" id="2.40.50.100:FF:000004">
    <property type="entry name" value="50S ribosomal protein L27"/>
    <property type="match status" value="1"/>
</dbReference>
<dbReference type="Gene3D" id="2.40.50.100">
    <property type="match status" value="1"/>
</dbReference>
<dbReference type="HAMAP" id="MF_00539">
    <property type="entry name" value="Ribosomal_bL27"/>
    <property type="match status" value="1"/>
</dbReference>
<dbReference type="InterPro" id="IPR001684">
    <property type="entry name" value="Ribosomal_bL27"/>
</dbReference>
<dbReference type="InterPro" id="IPR018261">
    <property type="entry name" value="Ribosomal_bL27_CS"/>
</dbReference>
<dbReference type="NCBIfam" id="TIGR00062">
    <property type="entry name" value="L27"/>
    <property type="match status" value="1"/>
</dbReference>
<dbReference type="PANTHER" id="PTHR15893:SF0">
    <property type="entry name" value="LARGE RIBOSOMAL SUBUNIT PROTEIN BL27M"/>
    <property type="match status" value="1"/>
</dbReference>
<dbReference type="PANTHER" id="PTHR15893">
    <property type="entry name" value="RIBOSOMAL PROTEIN L27"/>
    <property type="match status" value="1"/>
</dbReference>
<dbReference type="Pfam" id="PF01016">
    <property type="entry name" value="Ribosomal_L27"/>
    <property type="match status" value="1"/>
</dbReference>
<dbReference type="PRINTS" id="PR00063">
    <property type="entry name" value="RIBOSOMALL27"/>
</dbReference>
<dbReference type="SUPFAM" id="SSF110324">
    <property type="entry name" value="Ribosomal L27 protein-like"/>
    <property type="match status" value="1"/>
</dbReference>
<dbReference type="PROSITE" id="PS00831">
    <property type="entry name" value="RIBOSOMAL_L27"/>
    <property type="match status" value="1"/>
</dbReference>
<accession>P74267</accession>
<keyword id="KW-1185">Reference proteome</keyword>
<keyword id="KW-0687">Ribonucleoprotein</keyword>
<keyword id="KW-0689">Ribosomal protein</keyword>
<name>RL27_SYNY3</name>